<keyword id="KW-0067">ATP-binding</keyword>
<keyword id="KW-0119">Carbohydrate metabolism</keyword>
<keyword id="KW-0418">Kinase</keyword>
<keyword id="KW-0460">Magnesium</keyword>
<keyword id="KW-0479">Metal-binding</keyword>
<keyword id="KW-0511">Multifunctional enzyme</keyword>
<keyword id="KW-0547">Nucleotide-binding</keyword>
<keyword id="KW-1185">Reference proteome</keyword>
<keyword id="KW-0723">Serine/threonine-protein kinase</keyword>
<keyword id="KW-0808">Transferase</keyword>
<gene>
    <name evidence="1" type="primary">hprK</name>
    <name type="ordered locus">NT01CX_1656</name>
</gene>
<organism>
    <name type="scientific">Clostridium novyi (strain NT)</name>
    <dbReference type="NCBI Taxonomy" id="386415"/>
    <lineage>
        <taxon>Bacteria</taxon>
        <taxon>Bacillati</taxon>
        <taxon>Bacillota</taxon>
        <taxon>Clostridia</taxon>
        <taxon>Eubacteriales</taxon>
        <taxon>Clostridiaceae</taxon>
        <taxon>Clostridium</taxon>
    </lineage>
</organism>
<evidence type="ECO:0000255" key="1">
    <source>
        <dbReference type="HAMAP-Rule" id="MF_01249"/>
    </source>
</evidence>
<protein>
    <recommendedName>
        <fullName evidence="1">HPr kinase/phosphorylase</fullName>
        <shortName evidence="1">HPrK/P</shortName>
        <ecNumber evidence="1">2.7.11.-</ecNumber>
        <ecNumber evidence="1">2.7.4.-</ecNumber>
    </recommendedName>
    <alternativeName>
        <fullName evidence="1">HPr(Ser) kinase/phosphorylase</fullName>
    </alternativeName>
</protein>
<proteinExistence type="inferred from homology"/>
<reference key="1">
    <citation type="journal article" date="2006" name="Nat. Biotechnol.">
        <title>The genome and transcriptomes of the anti-tumor agent Clostridium novyi-NT.</title>
        <authorList>
            <person name="Bettegowda C."/>
            <person name="Huang X."/>
            <person name="Lin J."/>
            <person name="Cheong I."/>
            <person name="Kohli M."/>
            <person name="Szabo S.A."/>
            <person name="Zhang X."/>
            <person name="Diaz L.A. Jr."/>
            <person name="Velculescu V.E."/>
            <person name="Parmigiani G."/>
            <person name="Kinzler K.W."/>
            <person name="Vogelstein B."/>
            <person name="Zhou S."/>
        </authorList>
    </citation>
    <scope>NUCLEOTIDE SEQUENCE [LARGE SCALE GENOMIC DNA]</scope>
    <source>
        <strain>NT</strain>
    </source>
</reference>
<accession>A0PZD5</accession>
<comment type="function">
    <text evidence="1">Catalyzes the ATP- as well as the pyrophosphate-dependent phosphorylation of a specific serine residue in HPr, a phosphocarrier protein of the phosphoenolpyruvate-dependent sugar phosphotransferase system (PTS). HprK/P also catalyzes the pyrophosphate-producing, inorganic phosphate-dependent dephosphorylation (phosphorolysis) of seryl-phosphorylated HPr (P-Ser-HPr). The two antagonistic activities of HprK/P are regulated by several intracellular metabolites, which change their concentration in response to the absence or presence of rapidly metabolisable carbon sources (glucose, fructose, etc.) in the growth medium. Therefore, by controlling the phosphorylation state of HPr, HPrK/P is a sensor enzyme that plays a major role in the regulation of carbon metabolism and sugar transport: it mediates carbon catabolite repression (CCR), and regulates PTS-catalyzed carbohydrate uptake and inducer exclusion.</text>
</comment>
<comment type="catalytic activity">
    <reaction evidence="1">
        <text>[HPr protein]-L-serine + ATP = [HPr protein]-O-phospho-L-serine + ADP + H(+)</text>
        <dbReference type="Rhea" id="RHEA:46600"/>
        <dbReference type="Rhea" id="RHEA-COMP:11602"/>
        <dbReference type="Rhea" id="RHEA-COMP:11603"/>
        <dbReference type="ChEBI" id="CHEBI:15378"/>
        <dbReference type="ChEBI" id="CHEBI:29999"/>
        <dbReference type="ChEBI" id="CHEBI:30616"/>
        <dbReference type="ChEBI" id="CHEBI:83421"/>
        <dbReference type="ChEBI" id="CHEBI:456216"/>
    </reaction>
</comment>
<comment type="catalytic activity">
    <reaction evidence="1">
        <text>[HPr protein]-O-phospho-L-serine + phosphate + H(+) = [HPr protein]-L-serine + diphosphate</text>
        <dbReference type="Rhea" id="RHEA:46604"/>
        <dbReference type="Rhea" id="RHEA-COMP:11602"/>
        <dbReference type="Rhea" id="RHEA-COMP:11603"/>
        <dbReference type="ChEBI" id="CHEBI:15378"/>
        <dbReference type="ChEBI" id="CHEBI:29999"/>
        <dbReference type="ChEBI" id="CHEBI:33019"/>
        <dbReference type="ChEBI" id="CHEBI:43474"/>
        <dbReference type="ChEBI" id="CHEBI:83421"/>
    </reaction>
</comment>
<comment type="cofactor">
    <cofactor evidence="1">
        <name>Mg(2+)</name>
        <dbReference type="ChEBI" id="CHEBI:18420"/>
    </cofactor>
</comment>
<comment type="subunit">
    <text evidence="1">Homohexamer.</text>
</comment>
<comment type="domain">
    <text evidence="1">The Walker A ATP-binding motif also binds Pi and PPi.</text>
</comment>
<comment type="miscellaneous">
    <text evidence="1">Both phosphorylation and phosphorolysis are carried out by the same active site and suggest a common mechanism for both reactions.</text>
</comment>
<comment type="similarity">
    <text evidence="1">Belongs to the HPrK/P family.</text>
</comment>
<sequence length="307" mass="34882">MKITVEDIIKDLELEVLVQGEKDKEIKTSDINRPGLQFAGFYSYFANSRVQVIGNAEWSFLKNMPVELIRKRMKKFFEFDTPCIIIARDLEPHPQLIKNAKLHKRWVLRSKLLTTKVVTKLMNYLDAKLAPETRMHGVLVDVYGIGMLITGESGIGKSETALELIKRGHRLVADDAVDIKEIDGVLRGTSPYITSGMLEVRGMGIIDIPALYGLSSVLQKKTIHLVIYLEQWKPDRNYDRLGIDDDFLEILNVPVKKLTVPIRPGRNLAVIIEAAAANYRYGLMCKVSPVETINNRMESMVRNESKR</sequence>
<name>HPRK_CLONN</name>
<feature type="chain" id="PRO_1000067145" description="HPr kinase/phosphorylase">
    <location>
        <begin position="1"/>
        <end position="307"/>
    </location>
</feature>
<feature type="region of interest" description="Important for the catalytic mechanism of both phosphorylation and dephosphorylation" evidence="1">
    <location>
        <begin position="198"/>
        <end position="207"/>
    </location>
</feature>
<feature type="region of interest" description="Important for the catalytic mechanism of dephosphorylation" evidence="1">
    <location>
        <begin position="261"/>
        <end position="266"/>
    </location>
</feature>
<feature type="active site" evidence="1">
    <location>
        <position position="136"/>
    </location>
</feature>
<feature type="active site" evidence="1">
    <location>
        <position position="157"/>
    </location>
</feature>
<feature type="active site" description="Proton acceptor; for phosphorylation activity. Proton donor; for dephosphorylation activity" evidence="1">
    <location>
        <position position="175"/>
    </location>
</feature>
<feature type="active site" evidence="1">
    <location>
        <position position="240"/>
    </location>
</feature>
<feature type="binding site" evidence="1">
    <location>
        <begin position="151"/>
        <end position="158"/>
    </location>
    <ligand>
        <name>ATP</name>
        <dbReference type="ChEBI" id="CHEBI:30616"/>
    </ligand>
</feature>
<feature type="binding site" evidence="1">
    <location>
        <position position="158"/>
    </location>
    <ligand>
        <name>Mg(2+)</name>
        <dbReference type="ChEBI" id="CHEBI:18420"/>
    </ligand>
</feature>
<feature type="binding site" evidence="1">
    <location>
        <position position="199"/>
    </location>
    <ligand>
        <name>Mg(2+)</name>
        <dbReference type="ChEBI" id="CHEBI:18420"/>
    </ligand>
</feature>
<dbReference type="EC" id="2.7.11.-" evidence="1"/>
<dbReference type="EC" id="2.7.4.-" evidence="1"/>
<dbReference type="EMBL" id="CP000382">
    <property type="protein sequence ID" value="ABK60877.1"/>
    <property type="molecule type" value="Genomic_DNA"/>
</dbReference>
<dbReference type="RefSeq" id="WP_011721744.1">
    <property type="nucleotide sequence ID" value="NC_008593.1"/>
</dbReference>
<dbReference type="SMR" id="A0PZD5"/>
<dbReference type="STRING" id="386415.NT01CX_1656"/>
<dbReference type="KEGG" id="cno:NT01CX_1656"/>
<dbReference type="eggNOG" id="COG1493">
    <property type="taxonomic scope" value="Bacteria"/>
</dbReference>
<dbReference type="HOGENOM" id="CLU_052030_0_1_9"/>
<dbReference type="Proteomes" id="UP000008220">
    <property type="component" value="Chromosome"/>
</dbReference>
<dbReference type="GO" id="GO:0005524">
    <property type="term" value="F:ATP binding"/>
    <property type="evidence" value="ECO:0007669"/>
    <property type="project" value="UniProtKB-UniRule"/>
</dbReference>
<dbReference type="GO" id="GO:0000287">
    <property type="term" value="F:magnesium ion binding"/>
    <property type="evidence" value="ECO:0007669"/>
    <property type="project" value="UniProtKB-UniRule"/>
</dbReference>
<dbReference type="GO" id="GO:0000155">
    <property type="term" value="F:phosphorelay sensor kinase activity"/>
    <property type="evidence" value="ECO:0007669"/>
    <property type="project" value="InterPro"/>
</dbReference>
<dbReference type="GO" id="GO:0004674">
    <property type="term" value="F:protein serine/threonine kinase activity"/>
    <property type="evidence" value="ECO:0007669"/>
    <property type="project" value="UniProtKB-KW"/>
</dbReference>
<dbReference type="GO" id="GO:0004712">
    <property type="term" value="F:protein serine/threonine/tyrosine kinase activity"/>
    <property type="evidence" value="ECO:0007669"/>
    <property type="project" value="UniProtKB-UniRule"/>
</dbReference>
<dbReference type="GO" id="GO:0006109">
    <property type="term" value="P:regulation of carbohydrate metabolic process"/>
    <property type="evidence" value="ECO:0007669"/>
    <property type="project" value="UniProtKB-UniRule"/>
</dbReference>
<dbReference type="CDD" id="cd01918">
    <property type="entry name" value="HprK_C"/>
    <property type="match status" value="1"/>
</dbReference>
<dbReference type="FunFam" id="3.40.50.300:FF:000174">
    <property type="entry name" value="HPr kinase/phosphorylase"/>
    <property type="match status" value="1"/>
</dbReference>
<dbReference type="Gene3D" id="3.40.1390.20">
    <property type="entry name" value="HprK N-terminal domain-like"/>
    <property type="match status" value="1"/>
</dbReference>
<dbReference type="Gene3D" id="3.40.50.300">
    <property type="entry name" value="P-loop containing nucleotide triphosphate hydrolases"/>
    <property type="match status" value="1"/>
</dbReference>
<dbReference type="HAMAP" id="MF_01249">
    <property type="entry name" value="HPr_kinase"/>
    <property type="match status" value="1"/>
</dbReference>
<dbReference type="InterPro" id="IPR003755">
    <property type="entry name" value="HPr(Ser)_kin/Pase"/>
</dbReference>
<dbReference type="InterPro" id="IPR011104">
    <property type="entry name" value="Hpr_kin/Pase_C"/>
</dbReference>
<dbReference type="InterPro" id="IPR011126">
    <property type="entry name" value="Hpr_kin/Pase_Hpr_N"/>
</dbReference>
<dbReference type="InterPro" id="IPR027417">
    <property type="entry name" value="P-loop_NTPase"/>
</dbReference>
<dbReference type="InterPro" id="IPR028979">
    <property type="entry name" value="Ser_kin/Pase_Hpr-like_N_sf"/>
</dbReference>
<dbReference type="NCBIfam" id="TIGR00679">
    <property type="entry name" value="hpr-ser"/>
    <property type="match status" value="1"/>
</dbReference>
<dbReference type="PANTHER" id="PTHR30305:SF1">
    <property type="entry name" value="HPR KINASE_PHOSPHORYLASE"/>
    <property type="match status" value="1"/>
</dbReference>
<dbReference type="PANTHER" id="PTHR30305">
    <property type="entry name" value="PROTEIN YJDM-RELATED"/>
    <property type="match status" value="1"/>
</dbReference>
<dbReference type="Pfam" id="PF07475">
    <property type="entry name" value="Hpr_kinase_C"/>
    <property type="match status" value="1"/>
</dbReference>
<dbReference type="Pfam" id="PF02603">
    <property type="entry name" value="Hpr_kinase_N"/>
    <property type="match status" value="1"/>
</dbReference>
<dbReference type="SUPFAM" id="SSF75138">
    <property type="entry name" value="HprK N-terminal domain-like"/>
    <property type="match status" value="1"/>
</dbReference>
<dbReference type="SUPFAM" id="SSF53795">
    <property type="entry name" value="PEP carboxykinase-like"/>
    <property type="match status" value="1"/>
</dbReference>